<name>FOLD_CLOB8</name>
<keyword id="KW-0028">Amino-acid biosynthesis</keyword>
<keyword id="KW-0368">Histidine biosynthesis</keyword>
<keyword id="KW-0378">Hydrolase</keyword>
<keyword id="KW-0486">Methionine biosynthesis</keyword>
<keyword id="KW-0511">Multifunctional enzyme</keyword>
<keyword id="KW-0521">NADP</keyword>
<keyword id="KW-0554">One-carbon metabolism</keyword>
<keyword id="KW-0560">Oxidoreductase</keyword>
<keyword id="KW-0658">Purine biosynthesis</keyword>
<gene>
    <name evidence="1" type="primary">folD</name>
    <name type="ordered locus">Cbei_1702</name>
</gene>
<dbReference type="EC" id="1.5.1.5" evidence="1"/>
<dbReference type="EC" id="3.5.4.9" evidence="1"/>
<dbReference type="EMBL" id="CP000721">
    <property type="protein sequence ID" value="ABR33874.1"/>
    <property type="molecule type" value="Genomic_DNA"/>
</dbReference>
<dbReference type="RefSeq" id="WP_011969026.1">
    <property type="nucleotide sequence ID" value="NC_009617.1"/>
</dbReference>
<dbReference type="SMR" id="A6LU44"/>
<dbReference type="KEGG" id="cbe:Cbei_1702"/>
<dbReference type="eggNOG" id="COG0190">
    <property type="taxonomic scope" value="Bacteria"/>
</dbReference>
<dbReference type="HOGENOM" id="CLU_034045_2_1_9"/>
<dbReference type="UniPathway" id="UPA00193"/>
<dbReference type="Proteomes" id="UP000000565">
    <property type="component" value="Chromosome"/>
</dbReference>
<dbReference type="GO" id="GO:0005829">
    <property type="term" value="C:cytosol"/>
    <property type="evidence" value="ECO:0007669"/>
    <property type="project" value="TreeGrafter"/>
</dbReference>
<dbReference type="GO" id="GO:0004477">
    <property type="term" value="F:methenyltetrahydrofolate cyclohydrolase activity"/>
    <property type="evidence" value="ECO:0007669"/>
    <property type="project" value="UniProtKB-UniRule"/>
</dbReference>
<dbReference type="GO" id="GO:0004488">
    <property type="term" value="F:methylenetetrahydrofolate dehydrogenase (NADP+) activity"/>
    <property type="evidence" value="ECO:0007669"/>
    <property type="project" value="UniProtKB-UniRule"/>
</dbReference>
<dbReference type="GO" id="GO:0000105">
    <property type="term" value="P:L-histidine biosynthetic process"/>
    <property type="evidence" value="ECO:0007669"/>
    <property type="project" value="UniProtKB-KW"/>
</dbReference>
<dbReference type="GO" id="GO:0009086">
    <property type="term" value="P:methionine biosynthetic process"/>
    <property type="evidence" value="ECO:0007669"/>
    <property type="project" value="UniProtKB-KW"/>
</dbReference>
<dbReference type="GO" id="GO:0006164">
    <property type="term" value="P:purine nucleotide biosynthetic process"/>
    <property type="evidence" value="ECO:0007669"/>
    <property type="project" value="UniProtKB-KW"/>
</dbReference>
<dbReference type="GO" id="GO:0035999">
    <property type="term" value="P:tetrahydrofolate interconversion"/>
    <property type="evidence" value="ECO:0007669"/>
    <property type="project" value="UniProtKB-UniRule"/>
</dbReference>
<dbReference type="CDD" id="cd01080">
    <property type="entry name" value="NAD_bind_m-THF_DH_Cyclohyd"/>
    <property type="match status" value="1"/>
</dbReference>
<dbReference type="FunFam" id="3.40.50.720:FF:000094">
    <property type="entry name" value="Bifunctional protein FolD"/>
    <property type="match status" value="1"/>
</dbReference>
<dbReference type="FunFam" id="3.40.50.10860:FF:000005">
    <property type="entry name" value="C-1-tetrahydrofolate synthase, cytoplasmic, putative"/>
    <property type="match status" value="1"/>
</dbReference>
<dbReference type="Gene3D" id="3.40.50.10860">
    <property type="entry name" value="Leucine Dehydrogenase, chain A, domain 1"/>
    <property type="match status" value="1"/>
</dbReference>
<dbReference type="Gene3D" id="3.40.50.720">
    <property type="entry name" value="NAD(P)-binding Rossmann-like Domain"/>
    <property type="match status" value="1"/>
</dbReference>
<dbReference type="HAMAP" id="MF_01576">
    <property type="entry name" value="THF_DHG_CYH"/>
    <property type="match status" value="1"/>
</dbReference>
<dbReference type="InterPro" id="IPR046346">
    <property type="entry name" value="Aminoacid_DH-like_N_sf"/>
</dbReference>
<dbReference type="InterPro" id="IPR036291">
    <property type="entry name" value="NAD(P)-bd_dom_sf"/>
</dbReference>
<dbReference type="InterPro" id="IPR000672">
    <property type="entry name" value="THF_DH/CycHdrlase"/>
</dbReference>
<dbReference type="InterPro" id="IPR020630">
    <property type="entry name" value="THF_DH/CycHdrlase_cat_dom"/>
</dbReference>
<dbReference type="InterPro" id="IPR020631">
    <property type="entry name" value="THF_DH/CycHdrlase_NAD-bd_dom"/>
</dbReference>
<dbReference type="NCBIfam" id="NF010769">
    <property type="entry name" value="PRK14172.1"/>
    <property type="match status" value="1"/>
</dbReference>
<dbReference type="PANTHER" id="PTHR48099:SF5">
    <property type="entry name" value="C-1-TETRAHYDROFOLATE SYNTHASE, CYTOPLASMIC"/>
    <property type="match status" value="1"/>
</dbReference>
<dbReference type="PANTHER" id="PTHR48099">
    <property type="entry name" value="C-1-TETRAHYDROFOLATE SYNTHASE, CYTOPLASMIC-RELATED"/>
    <property type="match status" value="1"/>
</dbReference>
<dbReference type="Pfam" id="PF00763">
    <property type="entry name" value="THF_DHG_CYH"/>
    <property type="match status" value="1"/>
</dbReference>
<dbReference type="Pfam" id="PF02882">
    <property type="entry name" value="THF_DHG_CYH_C"/>
    <property type="match status" value="1"/>
</dbReference>
<dbReference type="PRINTS" id="PR00085">
    <property type="entry name" value="THFDHDRGNASE"/>
</dbReference>
<dbReference type="SUPFAM" id="SSF53223">
    <property type="entry name" value="Aminoacid dehydrogenase-like, N-terminal domain"/>
    <property type="match status" value="1"/>
</dbReference>
<dbReference type="SUPFAM" id="SSF51735">
    <property type="entry name" value="NAD(P)-binding Rossmann-fold domains"/>
    <property type="match status" value="1"/>
</dbReference>
<organism>
    <name type="scientific">Clostridium beijerinckii (strain ATCC 51743 / NCIMB 8052)</name>
    <name type="common">Clostridium acetobutylicum</name>
    <dbReference type="NCBI Taxonomy" id="290402"/>
    <lineage>
        <taxon>Bacteria</taxon>
        <taxon>Bacillati</taxon>
        <taxon>Bacillota</taxon>
        <taxon>Clostridia</taxon>
        <taxon>Eubacteriales</taxon>
        <taxon>Clostridiaceae</taxon>
        <taxon>Clostridium</taxon>
    </lineage>
</organism>
<evidence type="ECO:0000255" key="1">
    <source>
        <dbReference type="HAMAP-Rule" id="MF_01576"/>
    </source>
</evidence>
<feature type="chain" id="PRO_1000087894" description="Bifunctional protein FolD">
    <location>
        <begin position="1"/>
        <end position="282"/>
    </location>
</feature>
<feature type="binding site" evidence="1">
    <location>
        <begin position="165"/>
        <end position="167"/>
    </location>
    <ligand>
        <name>NADP(+)</name>
        <dbReference type="ChEBI" id="CHEBI:58349"/>
    </ligand>
</feature>
<feature type="binding site" evidence="1">
    <location>
        <position position="190"/>
    </location>
    <ligand>
        <name>NADP(+)</name>
        <dbReference type="ChEBI" id="CHEBI:58349"/>
    </ligand>
</feature>
<feature type="binding site" evidence="1">
    <location>
        <position position="231"/>
    </location>
    <ligand>
        <name>NADP(+)</name>
        <dbReference type="ChEBI" id="CHEBI:58349"/>
    </ligand>
</feature>
<protein>
    <recommendedName>
        <fullName evidence="1">Bifunctional protein FolD</fullName>
    </recommendedName>
    <domain>
        <recommendedName>
            <fullName evidence="1">Methylenetetrahydrofolate dehydrogenase</fullName>
            <ecNumber evidence="1">1.5.1.5</ecNumber>
        </recommendedName>
    </domain>
    <domain>
        <recommendedName>
            <fullName evidence="1">Methenyltetrahydrofolate cyclohydrolase</fullName>
            <ecNumber evidence="1">3.5.4.9</ecNumber>
        </recommendedName>
    </domain>
</protein>
<reference key="1">
    <citation type="submission" date="2007-06" db="EMBL/GenBank/DDBJ databases">
        <title>Complete sequence of Clostridium beijerinckii NCIMB 8052.</title>
        <authorList>
            <consortium name="US DOE Joint Genome Institute"/>
            <person name="Copeland A."/>
            <person name="Lucas S."/>
            <person name="Lapidus A."/>
            <person name="Barry K."/>
            <person name="Detter J.C."/>
            <person name="Glavina del Rio T."/>
            <person name="Hammon N."/>
            <person name="Israni S."/>
            <person name="Dalin E."/>
            <person name="Tice H."/>
            <person name="Pitluck S."/>
            <person name="Sims D."/>
            <person name="Brettin T."/>
            <person name="Bruce D."/>
            <person name="Tapia R."/>
            <person name="Brainard J."/>
            <person name="Schmutz J."/>
            <person name="Larimer F."/>
            <person name="Land M."/>
            <person name="Hauser L."/>
            <person name="Kyrpides N."/>
            <person name="Mikhailova N."/>
            <person name="Bennet G."/>
            <person name="Cann I."/>
            <person name="Chen J.-S."/>
            <person name="Contreras A.L."/>
            <person name="Jones D."/>
            <person name="Kashket E."/>
            <person name="Mitchell W."/>
            <person name="Stoddard S."/>
            <person name="Schwarz W."/>
            <person name="Qureshi N."/>
            <person name="Young M."/>
            <person name="Shi Z."/>
            <person name="Ezeji T."/>
            <person name="White B."/>
            <person name="Blaschek H."/>
            <person name="Richardson P."/>
        </authorList>
    </citation>
    <scope>NUCLEOTIDE SEQUENCE [LARGE SCALE GENOMIC DNA]</scope>
    <source>
        <strain>ATCC 51743 / NCIMB 8052</strain>
    </source>
</reference>
<comment type="function">
    <text evidence="1">Catalyzes the oxidation of 5,10-methylenetetrahydrofolate to 5,10-methenyltetrahydrofolate and then the hydrolysis of 5,10-methenyltetrahydrofolate to 10-formyltetrahydrofolate.</text>
</comment>
<comment type="catalytic activity">
    <reaction evidence="1">
        <text>(6R)-5,10-methylene-5,6,7,8-tetrahydrofolate + NADP(+) = (6R)-5,10-methenyltetrahydrofolate + NADPH</text>
        <dbReference type="Rhea" id="RHEA:22812"/>
        <dbReference type="ChEBI" id="CHEBI:15636"/>
        <dbReference type="ChEBI" id="CHEBI:57455"/>
        <dbReference type="ChEBI" id="CHEBI:57783"/>
        <dbReference type="ChEBI" id="CHEBI:58349"/>
        <dbReference type="EC" id="1.5.1.5"/>
    </reaction>
</comment>
<comment type="catalytic activity">
    <reaction evidence="1">
        <text>(6R)-5,10-methenyltetrahydrofolate + H2O = (6R)-10-formyltetrahydrofolate + H(+)</text>
        <dbReference type="Rhea" id="RHEA:23700"/>
        <dbReference type="ChEBI" id="CHEBI:15377"/>
        <dbReference type="ChEBI" id="CHEBI:15378"/>
        <dbReference type="ChEBI" id="CHEBI:57455"/>
        <dbReference type="ChEBI" id="CHEBI:195366"/>
        <dbReference type="EC" id="3.5.4.9"/>
    </reaction>
</comment>
<comment type="pathway">
    <text evidence="1">One-carbon metabolism; tetrahydrofolate interconversion.</text>
</comment>
<comment type="subunit">
    <text evidence="1">Homodimer.</text>
</comment>
<comment type="similarity">
    <text evidence="1">Belongs to the tetrahydrofolate dehydrogenase/cyclohydrolase family.</text>
</comment>
<accession>A6LU44</accession>
<sequence length="282" mass="31001">MGQIINGKEVALKVKEEIKNFVNNRKEKNLQVPKIASILVGNDGGSIYYMGSQEKVANSLGVEFLKLTLPETCNDEDVIAEINKLNEDNNIHGIILQLPLPNNFDEKKIIKQISPNKDIDCLTFESQGKLYMGEPKFLPCTPNSVITLIKSLNIDIVGKNVVVLGRSNIVGKPVAQLLLNENATVTICHSKTKNLREVCKNADILVVAIGRPKFIDETYVNENAIVIDVGTSSFEGKITGDVDFDKVIDKCRYLTPVPGGVGSLTTTLLIKNACEALQENEY</sequence>
<proteinExistence type="inferred from homology"/>